<gene>
    <name evidence="1" type="primary">rpoB</name>
    <name type="ordered locus">PFLU_5534</name>
</gene>
<protein>
    <recommendedName>
        <fullName evidence="1">DNA-directed RNA polymerase subunit beta</fullName>
        <shortName evidence="1">RNAP subunit beta</shortName>
        <ecNumber evidence="1">2.7.7.6</ecNumber>
    </recommendedName>
    <alternativeName>
        <fullName evidence="1">RNA polymerase subunit beta</fullName>
    </alternativeName>
    <alternativeName>
        <fullName evidence="1">Transcriptase subunit beta</fullName>
    </alternativeName>
</protein>
<reference key="1">
    <citation type="journal article" date="2009" name="Genome Biol.">
        <title>Genomic and genetic analyses of diversity and plant interactions of Pseudomonas fluorescens.</title>
        <authorList>
            <person name="Silby M.W."/>
            <person name="Cerdeno-Tarraga A.M."/>
            <person name="Vernikos G.S."/>
            <person name="Giddens S.R."/>
            <person name="Jackson R.W."/>
            <person name="Preston G.M."/>
            <person name="Zhang X.-X."/>
            <person name="Moon C.D."/>
            <person name="Gehrig S.M."/>
            <person name="Godfrey S.A.C."/>
            <person name="Knight C.G."/>
            <person name="Malone J.G."/>
            <person name="Robinson Z."/>
            <person name="Spiers A.J."/>
            <person name="Harris S."/>
            <person name="Challis G.L."/>
            <person name="Yaxley A.M."/>
            <person name="Harris D."/>
            <person name="Seeger K."/>
            <person name="Murphy L."/>
            <person name="Rutter S."/>
            <person name="Squares R."/>
            <person name="Quail M.A."/>
            <person name="Saunders E."/>
            <person name="Mavromatis K."/>
            <person name="Brettin T.S."/>
            <person name="Bentley S.D."/>
            <person name="Hothersall J."/>
            <person name="Stephens E."/>
            <person name="Thomas C.M."/>
            <person name="Parkhill J."/>
            <person name="Levy S.B."/>
            <person name="Rainey P.B."/>
            <person name="Thomson N.R."/>
        </authorList>
    </citation>
    <scope>NUCLEOTIDE SEQUENCE [LARGE SCALE GENOMIC DNA]</scope>
    <source>
        <strain>SBW25</strain>
    </source>
</reference>
<name>RPOB_PSEFS</name>
<keyword id="KW-0240">DNA-directed RNA polymerase</keyword>
<keyword id="KW-0548">Nucleotidyltransferase</keyword>
<keyword id="KW-0804">Transcription</keyword>
<keyword id="KW-0808">Transferase</keyword>
<sequence length="1357" mass="151018">MAYSYTEKKRIRKDFSKLPDVMDVPYLLAIQLDSYREFLQAGATKDQFRDVGLHAAFKSVFPIISYSGNAALEYVGYRLGEPAFDVKECVLRGVTYAVPLRVKVRLIIFDKESSNKAIKDIKEQEVYMGEIPLMTENGTFVINGTERVIVSQLHRSPGVFFDHDRGKTHSSGKLLYSARIIPYRGSWLDFEFDPKDCVFVRIDRRRKLPASVLLRALGYTTEQVLDAFYTTNVFSLKDETLSLELIASRLRGEIAVLDIQDEKGKVIVEAGRRITARHINQIEKAGIKSLDVPLDYVLGRTTAKVIVHPATGEILAECNTELNTEILAKIAKAQVVRIETLYTNDIDCGPFISDTLKIDSTSNQLEALVEIYRMMRPGEPPTKDAAETLFNNLFFSPERYDLSAVGRMKFNRRIGRTEIEGSGVLCKEDIVAVLKTLVDIRNGKGIVDDIDHLGNRRVRCVGEMAENQFRVGLVRVERAVKERLSMAESEGLMPQDLINAKPVAAAVKEFFGSSQLSQFMDQNNPLSEITHKRRVSALGPGGLTRERAGFEVRDVHPTHYGRVCPIETPEGPNIGLINSLAAYARTNQYGFLESPYRVVKDALVTDEIVFLSAIEEADHVIAQASATMNDKKVLIDELVAVRHLNEFTVKAPEDVTLMDVSPKQVVSVAASLIPFLEHDDANRALMGSNMQRQAVPTLRADKPLVGTGMERNVARDSGVCVVARRGGVIDSVDASRIVVRVADDEVETGEAGVDIYNLTKYTRSNQNTCINQRPLVRKGDRVQRSDIMADGPSTDMGELALGQNMRIAFMAWNGFNFEDSICLSERVVQEDRFTTIHIQELTCVARDTKLGPEEITADIPNVGEAALNKLDEAGIVYVGAEVGAGDILVGKVTPKGETQLTPEEKLLRAIFGEKASDVKDTSLRVPTGTKGTVIDVQVFTRDGVERDARALSIEKTQLDEIRKDLNEEFRIVEGATFERLRSALVGHKAEGGAGLKKGQDITDEILDGLEHGQWFKLRMAEDALNEQLEKAQAYIVDRRRLLDDKFEDKKRKLQQGDDLAPGVLKIVKVYLAIRRRIQPGDKMAGRHGNKGVVSVIMPVEDMPHDANGTPVDVVLNPLGVPSRMNVGQILETHLGLAAKGLGEKINRMIEEQRKVADLRKFLHEIYNEIGGRKEELDTFSDQEILDLAKNLRGGVPMATPVFDGAKESEIKAMLKLADLPESGQMQLFDGRTGNKFERPVTVGYMYMLKLNHLVDDKMHARSTGSYSLVTQQPLGGKAQFGGQRFGEMEVWALEAYGAAYTLQEMLTVKSDDVNGRTKMYKNIVDGDHRMEPGMPESFNVLIKEIRSLGIDIDLETE</sequence>
<dbReference type="EC" id="2.7.7.6" evidence="1"/>
<dbReference type="EMBL" id="AM181176">
    <property type="protein sequence ID" value="CAY52777.1"/>
    <property type="molecule type" value="Genomic_DNA"/>
</dbReference>
<dbReference type="RefSeq" id="WP_015886138.1">
    <property type="nucleotide sequence ID" value="NC_012660.1"/>
</dbReference>
<dbReference type="SMR" id="C3K2Y3"/>
<dbReference type="STRING" id="294.SRM1_05186"/>
<dbReference type="GeneID" id="93467156"/>
<dbReference type="eggNOG" id="COG0085">
    <property type="taxonomic scope" value="Bacteria"/>
</dbReference>
<dbReference type="HOGENOM" id="CLU_000524_4_3_6"/>
<dbReference type="OrthoDB" id="9803954at2"/>
<dbReference type="GO" id="GO:0000428">
    <property type="term" value="C:DNA-directed RNA polymerase complex"/>
    <property type="evidence" value="ECO:0007669"/>
    <property type="project" value="UniProtKB-KW"/>
</dbReference>
<dbReference type="GO" id="GO:0003677">
    <property type="term" value="F:DNA binding"/>
    <property type="evidence" value="ECO:0007669"/>
    <property type="project" value="UniProtKB-UniRule"/>
</dbReference>
<dbReference type="GO" id="GO:0003899">
    <property type="term" value="F:DNA-directed RNA polymerase activity"/>
    <property type="evidence" value="ECO:0007669"/>
    <property type="project" value="UniProtKB-UniRule"/>
</dbReference>
<dbReference type="GO" id="GO:0032549">
    <property type="term" value="F:ribonucleoside binding"/>
    <property type="evidence" value="ECO:0007669"/>
    <property type="project" value="InterPro"/>
</dbReference>
<dbReference type="GO" id="GO:0006351">
    <property type="term" value="P:DNA-templated transcription"/>
    <property type="evidence" value="ECO:0007669"/>
    <property type="project" value="UniProtKB-UniRule"/>
</dbReference>
<dbReference type="CDD" id="cd00653">
    <property type="entry name" value="RNA_pol_B_RPB2"/>
    <property type="match status" value="1"/>
</dbReference>
<dbReference type="FunFam" id="2.40.50.100:FF:000006">
    <property type="entry name" value="DNA-directed RNA polymerase subunit beta"/>
    <property type="match status" value="1"/>
</dbReference>
<dbReference type="FunFam" id="2.40.50.150:FF:000001">
    <property type="entry name" value="DNA-directed RNA polymerase subunit beta"/>
    <property type="match status" value="1"/>
</dbReference>
<dbReference type="FunFam" id="3.90.1110.10:FF:000001">
    <property type="entry name" value="DNA-directed RNA polymerase subunit beta"/>
    <property type="match status" value="1"/>
</dbReference>
<dbReference type="FunFam" id="3.90.1110.10:FF:000004">
    <property type="entry name" value="DNA-directed RNA polymerase subunit beta"/>
    <property type="match status" value="1"/>
</dbReference>
<dbReference type="FunFam" id="3.90.1800.10:FF:000001">
    <property type="entry name" value="DNA-directed RNA polymerase subunit beta"/>
    <property type="match status" value="1"/>
</dbReference>
<dbReference type="Gene3D" id="2.40.50.100">
    <property type="match status" value="1"/>
</dbReference>
<dbReference type="Gene3D" id="2.40.50.150">
    <property type="match status" value="1"/>
</dbReference>
<dbReference type="Gene3D" id="3.90.1100.10">
    <property type="match status" value="2"/>
</dbReference>
<dbReference type="Gene3D" id="2.30.150.10">
    <property type="entry name" value="DNA-directed RNA polymerase, beta subunit, external 1 domain"/>
    <property type="match status" value="1"/>
</dbReference>
<dbReference type="Gene3D" id="2.40.270.10">
    <property type="entry name" value="DNA-directed RNA polymerase, subunit 2, domain 6"/>
    <property type="match status" value="1"/>
</dbReference>
<dbReference type="Gene3D" id="3.90.1800.10">
    <property type="entry name" value="RNA polymerase alpha subunit dimerisation domain"/>
    <property type="match status" value="1"/>
</dbReference>
<dbReference type="Gene3D" id="3.90.1110.10">
    <property type="entry name" value="RNA polymerase Rpb2, domain 2"/>
    <property type="match status" value="1"/>
</dbReference>
<dbReference type="HAMAP" id="MF_01321">
    <property type="entry name" value="RNApol_bact_RpoB"/>
    <property type="match status" value="1"/>
</dbReference>
<dbReference type="InterPro" id="IPR042107">
    <property type="entry name" value="DNA-dir_RNA_pol_bsu_ext_1_sf"/>
</dbReference>
<dbReference type="InterPro" id="IPR019462">
    <property type="entry name" value="DNA-dir_RNA_pol_bsu_external_1"/>
</dbReference>
<dbReference type="InterPro" id="IPR015712">
    <property type="entry name" value="DNA-dir_RNA_pol_su2"/>
</dbReference>
<dbReference type="InterPro" id="IPR007120">
    <property type="entry name" value="DNA-dir_RNAP_su2_dom"/>
</dbReference>
<dbReference type="InterPro" id="IPR037033">
    <property type="entry name" value="DNA-dir_RNAP_su2_hyb_sf"/>
</dbReference>
<dbReference type="InterPro" id="IPR010243">
    <property type="entry name" value="RNA_pol_bsu_bac"/>
</dbReference>
<dbReference type="InterPro" id="IPR007121">
    <property type="entry name" value="RNA_pol_bsu_CS"/>
</dbReference>
<dbReference type="InterPro" id="IPR007644">
    <property type="entry name" value="RNA_pol_bsu_protrusion"/>
</dbReference>
<dbReference type="InterPro" id="IPR007642">
    <property type="entry name" value="RNA_pol_Rpb2_2"/>
</dbReference>
<dbReference type="InterPro" id="IPR037034">
    <property type="entry name" value="RNA_pol_Rpb2_2_sf"/>
</dbReference>
<dbReference type="InterPro" id="IPR007645">
    <property type="entry name" value="RNA_pol_Rpb2_3"/>
</dbReference>
<dbReference type="InterPro" id="IPR007641">
    <property type="entry name" value="RNA_pol_Rpb2_7"/>
</dbReference>
<dbReference type="InterPro" id="IPR014724">
    <property type="entry name" value="RNA_pol_RPB2_OB-fold"/>
</dbReference>
<dbReference type="NCBIfam" id="NF001616">
    <property type="entry name" value="PRK00405.1"/>
    <property type="match status" value="1"/>
</dbReference>
<dbReference type="NCBIfam" id="TIGR02013">
    <property type="entry name" value="rpoB"/>
    <property type="match status" value="1"/>
</dbReference>
<dbReference type="PANTHER" id="PTHR20856">
    <property type="entry name" value="DNA-DIRECTED RNA POLYMERASE I SUBUNIT 2"/>
    <property type="match status" value="1"/>
</dbReference>
<dbReference type="Pfam" id="PF04563">
    <property type="entry name" value="RNA_pol_Rpb2_1"/>
    <property type="match status" value="1"/>
</dbReference>
<dbReference type="Pfam" id="PF04561">
    <property type="entry name" value="RNA_pol_Rpb2_2"/>
    <property type="match status" value="2"/>
</dbReference>
<dbReference type="Pfam" id="PF04565">
    <property type="entry name" value="RNA_pol_Rpb2_3"/>
    <property type="match status" value="1"/>
</dbReference>
<dbReference type="Pfam" id="PF10385">
    <property type="entry name" value="RNA_pol_Rpb2_45"/>
    <property type="match status" value="1"/>
</dbReference>
<dbReference type="Pfam" id="PF00562">
    <property type="entry name" value="RNA_pol_Rpb2_6"/>
    <property type="match status" value="1"/>
</dbReference>
<dbReference type="Pfam" id="PF04560">
    <property type="entry name" value="RNA_pol_Rpb2_7"/>
    <property type="match status" value="1"/>
</dbReference>
<dbReference type="SUPFAM" id="SSF64484">
    <property type="entry name" value="beta and beta-prime subunits of DNA dependent RNA-polymerase"/>
    <property type="match status" value="1"/>
</dbReference>
<dbReference type="PROSITE" id="PS01166">
    <property type="entry name" value="RNA_POL_BETA"/>
    <property type="match status" value="1"/>
</dbReference>
<feature type="chain" id="PRO_1000214484" description="DNA-directed RNA polymerase subunit beta">
    <location>
        <begin position="1"/>
        <end position="1357"/>
    </location>
</feature>
<evidence type="ECO:0000255" key="1">
    <source>
        <dbReference type="HAMAP-Rule" id="MF_01321"/>
    </source>
</evidence>
<comment type="function">
    <text evidence="1">DNA-dependent RNA polymerase catalyzes the transcription of DNA into RNA using the four ribonucleoside triphosphates as substrates.</text>
</comment>
<comment type="catalytic activity">
    <reaction evidence="1">
        <text>RNA(n) + a ribonucleoside 5'-triphosphate = RNA(n+1) + diphosphate</text>
        <dbReference type="Rhea" id="RHEA:21248"/>
        <dbReference type="Rhea" id="RHEA-COMP:14527"/>
        <dbReference type="Rhea" id="RHEA-COMP:17342"/>
        <dbReference type="ChEBI" id="CHEBI:33019"/>
        <dbReference type="ChEBI" id="CHEBI:61557"/>
        <dbReference type="ChEBI" id="CHEBI:140395"/>
        <dbReference type="EC" id="2.7.7.6"/>
    </reaction>
</comment>
<comment type="subunit">
    <text evidence="1">The RNAP catalytic core consists of 2 alpha, 1 beta, 1 beta' and 1 omega subunit. When a sigma factor is associated with the core the holoenzyme is formed, which can initiate transcription.</text>
</comment>
<comment type="similarity">
    <text evidence="1">Belongs to the RNA polymerase beta chain family.</text>
</comment>
<organism>
    <name type="scientific">Pseudomonas fluorescens (strain SBW25)</name>
    <dbReference type="NCBI Taxonomy" id="216595"/>
    <lineage>
        <taxon>Bacteria</taxon>
        <taxon>Pseudomonadati</taxon>
        <taxon>Pseudomonadota</taxon>
        <taxon>Gammaproteobacteria</taxon>
        <taxon>Pseudomonadales</taxon>
        <taxon>Pseudomonadaceae</taxon>
        <taxon>Pseudomonas</taxon>
    </lineage>
</organism>
<accession>C3K2Y3</accession>
<proteinExistence type="inferred from homology"/>